<reference key="1">
    <citation type="submission" date="1995-07" db="EMBL/GenBank/DDBJ databases">
        <title>cDNA obtained by transformation of a yeast sterol mutant erg3 with an Arabidopsis cDNA library and subsequent selection with ketoconazole.</title>
        <authorList>
            <person name="Gachotte D."/>
            <person name="Benveniste P."/>
        </authorList>
    </citation>
    <scope>NUCLEOTIDE SEQUENCE [MRNA]</scope>
    <source>
        <strain>cv. Landsberg erecta</strain>
        <tissue>Seedling</tissue>
    </source>
</reference>
<reference key="2">
    <citation type="journal article" date="1998" name="DNA Res.">
        <title>Structural analysis of Arabidopsis thaliana chromosome 5. V. Sequence features of the regions of 1,381,565 bp covered by twenty one physically assigned P1 and TAC clones.</title>
        <authorList>
            <person name="Kaneko T."/>
            <person name="Kotani H."/>
            <person name="Nakamura Y."/>
            <person name="Sato S."/>
            <person name="Asamizu E."/>
            <person name="Miyajima N."/>
            <person name="Tabata S."/>
        </authorList>
    </citation>
    <scope>NUCLEOTIDE SEQUENCE [LARGE SCALE GENOMIC DNA]</scope>
    <source>
        <strain>cv. Columbia</strain>
    </source>
</reference>
<reference key="3">
    <citation type="journal article" date="2017" name="Plant J.">
        <title>Araport11: a complete reannotation of the Arabidopsis thaliana reference genome.</title>
        <authorList>
            <person name="Cheng C.Y."/>
            <person name="Krishnakumar V."/>
            <person name="Chan A.P."/>
            <person name="Thibaud-Nissen F."/>
            <person name="Schobel S."/>
            <person name="Town C.D."/>
        </authorList>
    </citation>
    <scope>GENOME REANNOTATION</scope>
    <source>
        <strain>cv. Columbia</strain>
    </source>
</reference>
<reference key="4">
    <citation type="journal article" date="2003" name="Science">
        <title>Empirical analysis of transcriptional activity in the Arabidopsis genome.</title>
        <authorList>
            <person name="Yamada K."/>
            <person name="Lim J."/>
            <person name="Dale J.M."/>
            <person name="Chen H."/>
            <person name="Shinn P."/>
            <person name="Palm C.J."/>
            <person name="Southwick A.M."/>
            <person name="Wu H.C."/>
            <person name="Kim C.J."/>
            <person name="Nguyen M."/>
            <person name="Pham P.K."/>
            <person name="Cheuk R.F."/>
            <person name="Karlin-Newmann G."/>
            <person name="Liu S.X."/>
            <person name="Lam B."/>
            <person name="Sakano H."/>
            <person name="Wu T."/>
            <person name="Yu G."/>
            <person name="Miranda M."/>
            <person name="Quach H.L."/>
            <person name="Tripp M."/>
            <person name="Chang C.H."/>
            <person name="Lee J.M."/>
            <person name="Toriumi M.J."/>
            <person name="Chan M.M."/>
            <person name="Tang C.C."/>
            <person name="Onodera C.S."/>
            <person name="Deng J.M."/>
            <person name="Akiyama K."/>
            <person name="Ansari Y."/>
            <person name="Arakawa T."/>
            <person name="Banh J."/>
            <person name="Banno F."/>
            <person name="Bowser L."/>
            <person name="Brooks S.Y."/>
            <person name="Carninci P."/>
            <person name="Chao Q."/>
            <person name="Choy N."/>
            <person name="Enju A."/>
            <person name="Goldsmith A.D."/>
            <person name="Gurjal M."/>
            <person name="Hansen N.F."/>
            <person name="Hayashizaki Y."/>
            <person name="Johnson-Hopson C."/>
            <person name="Hsuan V.W."/>
            <person name="Iida K."/>
            <person name="Karnes M."/>
            <person name="Khan S."/>
            <person name="Koesema E."/>
            <person name="Ishida J."/>
            <person name="Jiang P.X."/>
            <person name="Jones T."/>
            <person name="Kawai J."/>
            <person name="Kamiya A."/>
            <person name="Meyers C."/>
            <person name="Nakajima M."/>
            <person name="Narusaka M."/>
            <person name="Seki M."/>
            <person name="Sakurai T."/>
            <person name="Satou M."/>
            <person name="Tamse R."/>
            <person name="Vaysberg M."/>
            <person name="Wallender E.K."/>
            <person name="Wong C."/>
            <person name="Yamamura Y."/>
            <person name="Yuan S."/>
            <person name="Shinozaki K."/>
            <person name="Davis R.W."/>
            <person name="Theologis A."/>
            <person name="Ecker J.R."/>
        </authorList>
    </citation>
    <scope>NUCLEOTIDE SEQUENCE [LARGE SCALE MRNA]</scope>
    <source>
        <strain>cv. Columbia</strain>
    </source>
</reference>
<reference key="5">
    <citation type="submission" date="2002-03" db="EMBL/GenBank/DDBJ databases">
        <title>Full-length cDNA from Arabidopsis thaliana.</title>
        <authorList>
            <person name="Brover V.V."/>
            <person name="Troukhan M.E."/>
            <person name="Alexandrov N.A."/>
            <person name="Lu Y.-P."/>
            <person name="Flavell R.B."/>
            <person name="Feldmann K.A."/>
        </authorList>
    </citation>
    <scope>NUCLEOTIDE SEQUENCE [LARGE SCALE MRNA]</scope>
</reference>
<reference key="6">
    <citation type="journal article" date="2002" name="FEBS Lett.">
        <title>Identification and characterization of single-domain thiosulfate sulfurtransferases from Arabidopsis thaliana.</title>
        <authorList>
            <person name="Bauer M."/>
            <person name="Papenbrock J."/>
        </authorList>
    </citation>
    <scope>FUNCTION</scope>
    <scope>CATALYTIC ACTIVITY</scope>
    <scope>BIOPHYSICOCHEMICAL PROPERTIES</scope>
</reference>
<reference key="7">
    <citation type="journal article" date="2004" name="Plant Physiol.">
        <title>Intracellular localization of Arabidopsis sulfurtransferases.</title>
        <authorList>
            <person name="Bauer M."/>
            <person name="Dietrich C."/>
            <person name="Nowak K."/>
            <person name="Sierralta W.D."/>
            <person name="Papenbrock J."/>
        </authorList>
    </citation>
    <scope>SUBCELLULAR LOCATION</scope>
</reference>
<reference key="8">
    <citation type="journal article" date="2007" name="Plant Physiol. Biochem.">
        <title>Differential expression of Arabidopsis sulfurtransferases under various growth conditions.</title>
        <authorList>
            <person name="Bartels A."/>
            <person name="Mock H.P."/>
            <person name="Papenbrock J."/>
        </authorList>
    </citation>
    <scope>GENE FAMILY</scope>
    <scope>NOMENCLATURE</scope>
</reference>
<reference key="9">
    <citation type="journal article" date="2006" name="Protein Sci.">
        <title>Solution structure of a single-domain thiosulfate sulfurtransferase from Arabidopsis thaliana.</title>
        <authorList>
            <person name="Cornilescu G."/>
            <person name="Vinarov D.A."/>
            <person name="Tyler E.M."/>
            <person name="Markley J.L."/>
            <person name="Cornilescu C.C."/>
        </authorList>
    </citation>
    <scope>STRUCTURE BY NMR</scope>
    <scope>SUBUNIT</scope>
</reference>
<proteinExistence type="evidence at protein level"/>
<evidence type="ECO:0000250" key="1"/>
<evidence type="ECO:0000255" key="2">
    <source>
        <dbReference type="PROSITE-ProRule" id="PRU00173"/>
    </source>
</evidence>
<evidence type="ECO:0000269" key="3">
    <source>
    </source>
</evidence>
<evidence type="ECO:0000269" key="4">
    <source>
    </source>
</evidence>
<evidence type="ECO:0000269" key="5">
    <source>
    </source>
</evidence>
<evidence type="ECO:0000305" key="6"/>
<evidence type="ECO:0007829" key="7">
    <source>
        <dbReference type="PDB" id="1TQ1"/>
    </source>
</evidence>
<gene>
    <name type="primary">STR16</name>
    <name type="ordered locus">At5g66040</name>
    <name type="ORF">K2A18.11</name>
</gene>
<accession>Q39129</accession>
<accession>Q9FKX8</accession>
<sequence>MAEESRVPSSVSVTVAHDLLLAGHRYLDVRTPEEFSQGHACGAINVPYMNRGASGMSKNPDFLEQVSSHFGQSDNIIVGCQSGGRSIKATTDLLHAGFTGVKDIVGGYSAWAKNGLPTKA</sequence>
<keyword id="KW-0002">3D-structure</keyword>
<keyword id="KW-0025">Alternative splicing</keyword>
<keyword id="KW-0150">Chloroplast</keyword>
<keyword id="KW-0934">Plastid</keyword>
<keyword id="KW-1185">Reference proteome</keyword>
<keyword id="KW-0808">Transferase</keyword>
<organism>
    <name type="scientific">Arabidopsis thaliana</name>
    <name type="common">Mouse-ear cress</name>
    <dbReference type="NCBI Taxonomy" id="3702"/>
    <lineage>
        <taxon>Eukaryota</taxon>
        <taxon>Viridiplantae</taxon>
        <taxon>Streptophyta</taxon>
        <taxon>Embryophyta</taxon>
        <taxon>Tracheophyta</taxon>
        <taxon>Spermatophyta</taxon>
        <taxon>Magnoliopsida</taxon>
        <taxon>eudicotyledons</taxon>
        <taxon>Gunneridae</taxon>
        <taxon>Pentapetalae</taxon>
        <taxon>rosids</taxon>
        <taxon>malvids</taxon>
        <taxon>Brassicales</taxon>
        <taxon>Brassicaceae</taxon>
        <taxon>Camelineae</taxon>
        <taxon>Arabidopsis</taxon>
    </lineage>
</organism>
<comment type="function">
    <text evidence="3">Thought to act during the early stages of leaf senescence. Catalyzes the transfer of a sulfur ion from a donor to cyanide or to other thiol compounds. Substrate preference is thiosulfate &gt; 3-mercaptopyruvate.</text>
</comment>
<comment type="catalytic activity">
    <reaction evidence="3">
        <text>thiosulfate + hydrogen cyanide = thiocyanate + sulfite + 2 H(+)</text>
        <dbReference type="Rhea" id="RHEA:16881"/>
        <dbReference type="ChEBI" id="CHEBI:15378"/>
        <dbReference type="ChEBI" id="CHEBI:17359"/>
        <dbReference type="ChEBI" id="CHEBI:18022"/>
        <dbReference type="ChEBI" id="CHEBI:18407"/>
        <dbReference type="ChEBI" id="CHEBI:33542"/>
        <dbReference type="EC" id="2.8.1.1"/>
    </reaction>
</comment>
<comment type="biophysicochemical properties">
    <kinetics>
        <KM evidence="3">7.4 mM for thiosulfate</KM>
        <KM evidence="3">51.7 mM for 3-mercaptopyruvate</KM>
    </kinetics>
</comment>
<comment type="subunit">
    <text evidence="5">Monomer.</text>
</comment>
<comment type="subcellular location">
    <subcellularLocation>
        <location evidence="4">Plastid</location>
        <location evidence="4">Chloroplast</location>
    </subcellularLocation>
</comment>
<comment type="alternative products">
    <event type="alternative splicing"/>
    <isoform>
        <id>Q39129-1</id>
        <name>1</name>
        <sequence type="displayed"/>
    </isoform>
    <text>A number of isoforms are produced. According to EST sequences.</text>
</comment>
<comment type="sequence caution" evidence="6">
    <conflict type="frameshift">
        <sequence resource="EMBL-CDS" id="CAA61433"/>
    </conflict>
</comment>
<protein>
    <recommendedName>
        <fullName>Thiosulfate sulfurtransferase 16, chloroplastic</fullName>
        <ecNumber>2.8.1.1</ecNumber>
    </recommendedName>
    <alternativeName>
        <fullName>Rhodanese</fullName>
    </alternativeName>
    <alternativeName>
        <fullName>Senescence-associated protein</fullName>
    </alternativeName>
    <alternativeName>
        <fullName>Sulfurtransferase 16</fullName>
        <shortName>AtStr16</shortName>
    </alternativeName>
</protein>
<dbReference type="EC" id="2.8.1.1"/>
<dbReference type="EMBL" id="X89036">
    <property type="protein sequence ID" value="CAA61433.1"/>
    <property type="status" value="ALT_FRAME"/>
    <property type="molecule type" value="mRNA"/>
</dbReference>
<dbReference type="EMBL" id="AB011474">
    <property type="protein sequence ID" value="BAB10409.1"/>
    <property type="molecule type" value="Genomic_DNA"/>
</dbReference>
<dbReference type="EMBL" id="CP002688">
    <property type="protein sequence ID" value="AED98146.1"/>
    <property type="molecule type" value="Genomic_DNA"/>
</dbReference>
<dbReference type="EMBL" id="AY049302">
    <property type="protein sequence ID" value="AAK83644.1"/>
    <property type="molecule type" value="mRNA"/>
</dbReference>
<dbReference type="EMBL" id="BT000864">
    <property type="protein sequence ID" value="AAN38701.1"/>
    <property type="molecule type" value="mRNA"/>
</dbReference>
<dbReference type="EMBL" id="AY084763">
    <property type="protein sequence ID" value="AAM61332.1"/>
    <property type="molecule type" value="mRNA"/>
</dbReference>
<dbReference type="PIR" id="S58275">
    <property type="entry name" value="S58275"/>
</dbReference>
<dbReference type="RefSeq" id="NP_851278.1">
    <molecule id="Q39129-1"/>
    <property type="nucleotide sequence ID" value="NM_180947.3"/>
</dbReference>
<dbReference type="PDB" id="1TQ1">
    <property type="method" value="NMR"/>
    <property type="chains" value="A=2-120"/>
</dbReference>
<dbReference type="PDBsum" id="1TQ1"/>
<dbReference type="BMRB" id="Q39129"/>
<dbReference type="SMR" id="Q39129"/>
<dbReference type="BioGRID" id="21976">
    <property type="interactions" value="1"/>
</dbReference>
<dbReference type="FunCoup" id="Q39129">
    <property type="interactions" value="310"/>
</dbReference>
<dbReference type="STRING" id="3702.Q39129"/>
<dbReference type="PaxDb" id="3702-AT5G66040.1"/>
<dbReference type="ProteomicsDB" id="245225">
    <molecule id="Q39129-1"/>
</dbReference>
<dbReference type="EnsemblPlants" id="AT5G66040.1">
    <molecule id="Q39129-1"/>
    <property type="protein sequence ID" value="AT5G66040.1"/>
    <property type="gene ID" value="AT5G66040"/>
</dbReference>
<dbReference type="GeneID" id="836734"/>
<dbReference type="Gramene" id="AT5G66040.1">
    <molecule id="Q39129-1"/>
    <property type="protein sequence ID" value="AT5G66040.1"/>
    <property type="gene ID" value="AT5G66040"/>
</dbReference>
<dbReference type="KEGG" id="ath:AT5G66040"/>
<dbReference type="Araport" id="AT5G66040"/>
<dbReference type="TAIR" id="AT5G66040">
    <property type="gene designation" value="STR16"/>
</dbReference>
<dbReference type="eggNOG" id="KOG1530">
    <property type="taxonomic scope" value="Eukaryota"/>
</dbReference>
<dbReference type="InParanoid" id="Q39129"/>
<dbReference type="OMA" id="PSFSWMA"/>
<dbReference type="OrthoDB" id="566238at2759"/>
<dbReference type="PhylomeDB" id="Q39129"/>
<dbReference type="BioCyc" id="ARA:AT5G66040-MONOMER"/>
<dbReference type="SABIO-RK" id="Q39129"/>
<dbReference type="EvolutionaryTrace" id="Q39129"/>
<dbReference type="PRO" id="PR:Q39129"/>
<dbReference type="Proteomes" id="UP000006548">
    <property type="component" value="Chromosome 5"/>
</dbReference>
<dbReference type="ExpressionAtlas" id="Q39129">
    <property type="expression patterns" value="baseline and differential"/>
</dbReference>
<dbReference type="GO" id="GO:0009507">
    <property type="term" value="C:chloroplast"/>
    <property type="evidence" value="ECO:0000314"/>
    <property type="project" value="TAIR"/>
</dbReference>
<dbReference type="GO" id="GO:0005829">
    <property type="term" value="C:cytosol"/>
    <property type="evidence" value="ECO:0007005"/>
    <property type="project" value="TAIR"/>
</dbReference>
<dbReference type="GO" id="GO:0009536">
    <property type="term" value="C:plastid"/>
    <property type="evidence" value="ECO:0007005"/>
    <property type="project" value="TAIR"/>
</dbReference>
<dbReference type="GO" id="GO:0004792">
    <property type="term" value="F:thiosulfate-cyanide sulfurtransferase activity"/>
    <property type="evidence" value="ECO:0000314"/>
    <property type="project" value="TAIR"/>
</dbReference>
<dbReference type="CDD" id="cd00158">
    <property type="entry name" value="RHOD"/>
    <property type="match status" value="1"/>
</dbReference>
<dbReference type="FunFam" id="3.40.250.10:FF:000062">
    <property type="entry name" value="Thiosulfate sulfurtransferase 16, chloroplastic"/>
    <property type="match status" value="1"/>
</dbReference>
<dbReference type="Gene3D" id="3.40.250.10">
    <property type="entry name" value="Rhodanese-like domain"/>
    <property type="match status" value="1"/>
</dbReference>
<dbReference type="InterPro" id="IPR001763">
    <property type="entry name" value="Rhodanese-like_dom"/>
</dbReference>
<dbReference type="InterPro" id="IPR036873">
    <property type="entry name" value="Rhodanese-like_dom_sf"/>
</dbReference>
<dbReference type="InterPro" id="IPR052367">
    <property type="entry name" value="Thiosulfate_ST/Rhodanese-like"/>
</dbReference>
<dbReference type="PANTHER" id="PTHR45431:SF7">
    <property type="entry name" value="RHODANESE DOMAIN-CONTAINING PROTEIN"/>
    <property type="match status" value="1"/>
</dbReference>
<dbReference type="PANTHER" id="PTHR45431">
    <property type="entry name" value="RHODANESE-LIKE DOMAIN-CONTAINING PROTEIN 15, CHLOROPLASTIC"/>
    <property type="match status" value="1"/>
</dbReference>
<dbReference type="Pfam" id="PF00581">
    <property type="entry name" value="Rhodanese"/>
    <property type="match status" value="1"/>
</dbReference>
<dbReference type="SMART" id="SM00450">
    <property type="entry name" value="RHOD"/>
    <property type="match status" value="1"/>
</dbReference>
<dbReference type="SUPFAM" id="SSF52821">
    <property type="entry name" value="Rhodanese/Cell cycle control phosphatase"/>
    <property type="match status" value="1"/>
</dbReference>
<dbReference type="PROSITE" id="PS50206">
    <property type="entry name" value="RHODANESE_3"/>
    <property type="match status" value="1"/>
</dbReference>
<feature type="chain" id="PRO_0000139405" description="Thiosulfate sulfurtransferase 16, chloroplastic">
    <location>
        <begin position="1"/>
        <end position="120"/>
    </location>
</feature>
<feature type="domain" description="Rhodanese" evidence="2">
    <location>
        <begin position="20"/>
        <end position="120"/>
    </location>
</feature>
<feature type="active site" description="Cysteine persulfide intermediate" evidence="2">
    <location>
        <position position="80"/>
    </location>
</feature>
<feature type="binding site" evidence="1">
    <location>
        <position position="85"/>
    </location>
    <ligand>
        <name>substrate</name>
    </ligand>
</feature>
<feature type="sequence conflict" description="In Ref. 1; CAA61433." evidence="6" ref="1">
    <original>E</original>
    <variation>D</variation>
    <location>
        <position position="3"/>
    </location>
</feature>
<feature type="strand" evidence="7">
    <location>
        <begin position="9"/>
        <end position="12"/>
    </location>
</feature>
<feature type="helix" evidence="7">
    <location>
        <begin position="13"/>
        <end position="22"/>
    </location>
</feature>
<feature type="strand" evidence="7">
    <location>
        <begin position="26"/>
        <end position="30"/>
    </location>
</feature>
<feature type="helix" evidence="7">
    <location>
        <begin position="32"/>
        <end position="37"/>
    </location>
</feature>
<feature type="strand" evidence="7">
    <location>
        <begin position="43"/>
        <end position="45"/>
    </location>
</feature>
<feature type="turn" evidence="7">
    <location>
        <begin position="53"/>
        <end position="55"/>
    </location>
</feature>
<feature type="turn" evidence="7">
    <location>
        <begin position="59"/>
        <end position="61"/>
    </location>
</feature>
<feature type="helix" evidence="7">
    <location>
        <begin position="62"/>
        <end position="66"/>
    </location>
</feature>
<feature type="turn" evidence="7">
    <location>
        <begin position="67"/>
        <end position="69"/>
    </location>
</feature>
<feature type="strand" evidence="7">
    <location>
        <begin position="74"/>
        <end position="82"/>
    </location>
</feature>
<feature type="helix" evidence="7">
    <location>
        <begin position="85"/>
        <end position="97"/>
    </location>
</feature>
<feature type="strand" evidence="7">
    <location>
        <begin position="100"/>
        <end position="105"/>
    </location>
</feature>
<feature type="helix" evidence="7">
    <location>
        <begin position="108"/>
        <end position="114"/>
    </location>
</feature>
<name>STR16_ARATH</name>